<reference key="1">
    <citation type="journal article" date="2009" name="PLoS Genet.">
        <title>Alliance of proteomics and genomics to unravel the specificities of Sahara bacterium Deinococcus deserti.</title>
        <authorList>
            <person name="de Groot A."/>
            <person name="Dulermo R."/>
            <person name="Ortet P."/>
            <person name="Blanchard L."/>
            <person name="Guerin P."/>
            <person name="Fernandez B."/>
            <person name="Vacherie B."/>
            <person name="Dossat C."/>
            <person name="Jolivet E."/>
            <person name="Siguier P."/>
            <person name="Chandler M."/>
            <person name="Barakat M."/>
            <person name="Dedieu A."/>
            <person name="Barbe V."/>
            <person name="Heulin T."/>
            <person name="Sommer S."/>
            <person name="Achouak W."/>
            <person name="Armengaud J."/>
        </authorList>
    </citation>
    <scope>NUCLEOTIDE SEQUENCE [LARGE SCALE GENOMIC DNA]</scope>
    <source>
        <strain>DSM 17065 / CIP 109153 / LMG 22923 / VCD115</strain>
    </source>
</reference>
<keyword id="KW-0131">Cell cycle</keyword>
<keyword id="KW-0132">Cell division</keyword>
<keyword id="KW-0133">Cell shape</keyword>
<keyword id="KW-0961">Cell wall biogenesis/degradation</keyword>
<keyword id="KW-0963">Cytoplasm</keyword>
<keyword id="KW-0573">Peptidoglycan synthesis</keyword>
<keyword id="KW-0670">Pyruvate</keyword>
<keyword id="KW-1185">Reference proteome</keyword>
<keyword id="KW-0808">Transferase</keyword>
<gene>
    <name evidence="1" type="primary">murA</name>
    <name type="ordered locus">Deide_18010</name>
</gene>
<evidence type="ECO:0000255" key="1">
    <source>
        <dbReference type="HAMAP-Rule" id="MF_00111"/>
    </source>
</evidence>
<sequence length="425" mass="45060">MQLTPLHIQGGRELRGEIAVQGSKNAALPIIVASLLSSEKVTLHGIPRLSDVYTILDLVHHIGTQHQWVGPNSLELHTPSIVNTDAPYALVNKMRASFVVLGAILARAGQARVSMPGGCAWGPRPVDQHVKALRALGAEISEEGGNFHARRQGSLNGTFVFELLTVGGTHNAVLAAVLGDGVVTLENASIDTDVVDLIEFLNSLGADIQGAGTNTLVIRGVQQLRGGEYTVIPDRIEAGTFMMLAAATRSQLTVRNVRPDHLRAVSAKLQEMGVDILEAGNSLIVDARQRELRPVNVTTQSYPGFPTDVQPQMSALLATVPGTSVVQDPVYPDRLTHVAELHRMGANITVSGYTQVIQGSALHAAPVKAADLRAGAALFIAGLTCTGETVIDGVQYLNRGYENLAERLCGIGATAQQTELAVAMD</sequence>
<proteinExistence type="inferred from homology"/>
<feature type="chain" id="PRO_1000202924" description="UDP-N-acetylglucosamine 1-carboxyvinyltransferase">
    <location>
        <begin position="1"/>
        <end position="425"/>
    </location>
</feature>
<feature type="active site" description="Proton donor" evidence="1">
    <location>
        <position position="119"/>
    </location>
</feature>
<feature type="binding site" evidence="1">
    <location>
        <begin position="24"/>
        <end position="25"/>
    </location>
    <ligand>
        <name>phosphoenolpyruvate</name>
        <dbReference type="ChEBI" id="CHEBI:58702"/>
    </ligand>
</feature>
<feature type="binding site" evidence="1">
    <location>
        <position position="95"/>
    </location>
    <ligand>
        <name>UDP-N-acetyl-alpha-D-glucosamine</name>
        <dbReference type="ChEBI" id="CHEBI:57705"/>
    </ligand>
</feature>
<feature type="binding site" evidence="1">
    <location>
        <begin position="124"/>
        <end position="128"/>
    </location>
    <ligand>
        <name>UDP-N-acetyl-alpha-D-glucosamine</name>
        <dbReference type="ChEBI" id="CHEBI:57705"/>
    </ligand>
</feature>
<feature type="binding site" evidence="1">
    <location>
        <position position="308"/>
    </location>
    <ligand>
        <name>UDP-N-acetyl-alpha-D-glucosamine</name>
        <dbReference type="ChEBI" id="CHEBI:57705"/>
    </ligand>
</feature>
<feature type="binding site" evidence="1">
    <location>
        <position position="330"/>
    </location>
    <ligand>
        <name>UDP-N-acetyl-alpha-D-glucosamine</name>
        <dbReference type="ChEBI" id="CHEBI:57705"/>
    </ligand>
</feature>
<feature type="modified residue" description="2-(S-cysteinyl)pyruvic acid O-phosphothioketal" evidence="1">
    <location>
        <position position="119"/>
    </location>
</feature>
<name>MURA_DEIDV</name>
<dbReference type="EC" id="2.5.1.7" evidence="1"/>
<dbReference type="EMBL" id="CP001114">
    <property type="protein sequence ID" value="ACO46788.1"/>
    <property type="molecule type" value="Genomic_DNA"/>
</dbReference>
<dbReference type="RefSeq" id="WP_012693910.1">
    <property type="nucleotide sequence ID" value="NC_012526.1"/>
</dbReference>
<dbReference type="SMR" id="C1CX71"/>
<dbReference type="STRING" id="546414.Deide_18010"/>
<dbReference type="PaxDb" id="546414-Deide_18010"/>
<dbReference type="KEGG" id="ddr:Deide_18010"/>
<dbReference type="eggNOG" id="COG0766">
    <property type="taxonomic scope" value="Bacteria"/>
</dbReference>
<dbReference type="HOGENOM" id="CLU_027387_0_0_0"/>
<dbReference type="OrthoDB" id="9803760at2"/>
<dbReference type="UniPathway" id="UPA00219"/>
<dbReference type="Proteomes" id="UP000002208">
    <property type="component" value="Chromosome"/>
</dbReference>
<dbReference type="GO" id="GO:0005737">
    <property type="term" value="C:cytoplasm"/>
    <property type="evidence" value="ECO:0007669"/>
    <property type="project" value="UniProtKB-SubCell"/>
</dbReference>
<dbReference type="GO" id="GO:0008760">
    <property type="term" value="F:UDP-N-acetylglucosamine 1-carboxyvinyltransferase activity"/>
    <property type="evidence" value="ECO:0007669"/>
    <property type="project" value="UniProtKB-UniRule"/>
</dbReference>
<dbReference type="GO" id="GO:0051301">
    <property type="term" value="P:cell division"/>
    <property type="evidence" value="ECO:0007669"/>
    <property type="project" value="UniProtKB-KW"/>
</dbReference>
<dbReference type="GO" id="GO:0071555">
    <property type="term" value="P:cell wall organization"/>
    <property type="evidence" value="ECO:0007669"/>
    <property type="project" value="UniProtKB-KW"/>
</dbReference>
<dbReference type="GO" id="GO:0009252">
    <property type="term" value="P:peptidoglycan biosynthetic process"/>
    <property type="evidence" value="ECO:0007669"/>
    <property type="project" value="UniProtKB-UniRule"/>
</dbReference>
<dbReference type="GO" id="GO:0008360">
    <property type="term" value="P:regulation of cell shape"/>
    <property type="evidence" value="ECO:0007669"/>
    <property type="project" value="UniProtKB-KW"/>
</dbReference>
<dbReference type="GO" id="GO:0019277">
    <property type="term" value="P:UDP-N-acetylgalactosamine biosynthetic process"/>
    <property type="evidence" value="ECO:0007669"/>
    <property type="project" value="InterPro"/>
</dbReference>
<dbReference type="CDD" id="cd01555">
    <property type="entry name" value="UdpNAET"/>
    <property type="match status" value="1"/>
</dbReference>
<dbReference type="Gene3D" id="3.65.10.10">
    <property type="entry name" value="Enolpyruvate transferase domain"/>
    <property type="match status" value="2"/>
</dbReference>
<dbReference type="HAMAP" id="MF_00111">
    <property type="entry name" value="MurA"/>
    <property type="match status" value="1"/>
</dbReference>
<dbReference type="InterPro" id="IPR001986">
    <property type="entry name" value="Enolpyruvate_Tfrase_dom"/>
</dbReference>
<dbReference type="InterPro" id="IPR036968">
    <property type="entry name" value="Enolpyruvate_Tfrase_sf"/>
</dbReference>
<dbReference type="InterPro" id="IPR050068">
    <property type="entry name" value="MurA_subfamily"/>
</dbReference>
<dbReference type="InterPro" id="IPR013792">
    <property type="entry name" value="RNA3'P_cycl/enolpyr_Trfase_a/b"/>
</dbReference>
<dbReference type="InterPro" id="IPR005750">
    <property type="entry name" value="UDP_GlcNAc_COvinyl_MurA"/>
</dbReference>
<dbReference type="NCBIfam" id="TIGR01072">
    <property type="entry name" value="murA"/>
    <property type="match status" value="1"/>
</dbReference>
<dbReference type="NCBIfam" id="NF006873">
    <property type="entry name" value="PRK09369.1"/>
    <property type="match status" value="1"/>
</dbReference>
<dbReference type="PANTHER" id="PTHR43783">
    <property type="entry name" value="UDP-N-ACETYLGLUCOSAMINE 1-CARBOXYVINYLTRANSFERASE"/>
    <property type="match status" value="1"/>
</dbReference>
<dbReference type="PANTHER" id="PTHR43783:SF1">
    <property type="entry name" value="UDP-N-ACETYLGLUCOSAMINE 1-CARBOXYVINYLTRANSFERASE"/>
    <property type="match status" value="1"/>
</dbReference>
<dbReference type="Pfam" id="PF00275">
    <property type="entry name" value="EPSP_synthase"/>
    <property type="match status" value="1"/>
</dbReference>
<dbReference type="SUPFAM" id="SSF55205">
    <property type="entry name" value="EPT/RTPC-like"/>
    <property type="match status" value="1"/>
</dbReference>
<protein>
    <recommendedName>
        <fullName evidence="1">UDP-N-acetylglucosamine 1-carboxyvinyltransferase</fullName>
        <ecNumber evidence="1">2.5.1.7</ecNumber>
    </recommendedName>
    <alternativeName>
        <fullName evidence="1">Enoylpyruvate transferase</fullName>
    </alternativeName>
    <alternativeName>
        <fullName evidence="1">UDP-N-acetylglucosamine enolpyruvyl transferase</fullName>
        <shortName evidence="1">EPT</shortName>
    </alternativeName>
</protein>
<accession>C1CX71</accession>
<organism>
    <name type="scientific">Deinococcus deserti (strain DSM 17065 / CIP 109153 / LMG 22923 / VCD115)</name>
    <dbReference type="NCBI Taxonomy" id="546414"/>
    <lineage>
        <taxon>Bacteria</taxon>
        <taxon>Thermotogati</taxon>
        <taxon>Deinococcota</taxon>
        <taxon>Deinococci</taxon>
        <taxon>Deinococcales</taxon>
        <taxon>Deinococcaceae</taxon>
        <taxon>Deinococcus</taxon>
    </lineage>
</organism>
<comment type="function">
    <text evidence="1">Cell wall formation. Adds enolpyruvyl to UDP-N-acetylglucosamine.</text>
</comment>
<comment type="catalytic activity">
    <reaction evidence="1">
        <text>phosphoenolpyruvate + UDP-N-acetyl-alpha-D-glucosamine = UDP-N-acetyl-3-O-(1-carboxyvinyl)-alpha-D-glucosamine + phosphate</text>
        <dbReference type="Rhea" id="RHEA:18681"/>
        <dbReference type="ChEBI" id="CHEBI:43474"/>
        <dbReference type="ChEBI" id="CHEBI:57705"/>
        <dbReference type="ChEBI" id="CHEBI:58702"/>
        <dbReference type="ChEBI" id="CHEBI:68483"/>
        <dbReference type="EC" id="2.5.1.7"/>
    </reaction>
</comment>
<comment type="pathway">
    <text evidence="1">Cell wall biogenesis; peptidoglycan biosynthesis.</text>
</comment>
<comment type="subcellular location">
    <subcellularLocation>
        <location evidence="1">Cytoplasm</location>
    </subcellularLocation>
</comment>
<comment type="similarity">
    <text evidence="1">Belongs to the EPSP synthase family. MurA subfamily.</text>
</comment>